<feature type="chain" id="PRO_0000224179" description="Large ribosomal subunit protein uL23">
    <location>
        <begin position="1"/>
        <end position="91"/>
    </location>
</feature>
<proteinExistence type="inferred from homology"/>
<dbReference type="EMBL" id="AP008934">
    <property type="protein sequence ID" value="BAE17810.1"/>
    <property type="molecule type" value="Genomic_DNA"/>
</dbReference>
<dbReference type="RefSeq" id="WP_011302599.1">
    <property type="nucleotide sequence ID" value="NZ_MTGA01000036.1"/>
</dbReference>
<dbReference type="SMR" id="Q49ZG6"/>
<dbReference type="GeneID" id="3615964"/>
<dbReference type="KEGG" id="ssp:SSP0665"/>
<dbReference type="PATRIC" id="fig|342451.11.peg.667"/>
<dbReference type="eggNOG" id="COG0089">
    <property type="taxonomic scope" value="Bacteria"/>
</dbReference>
<dbReference type="HOGENOM" id="CLU_037562_3_2_9"/>
<dbReference type="OrthoDB" id="9793353at2"/>
<dbReference type="Proteomes" id="UP000006371">
    <property type="component" value="Chromosome"/>
</dbReference>
<dbReference type="GO" id="GO:1990904">
    <property type="term" value="C:ribonucleoprotein complex"/>
    <property type="evidence" value="ECO:0007669"/>
    <property type="project" value="UniProtKB-KW"/>
</dbReference>
<dbReference type="GO" id="GO:0005840">
    <property type="term" value="C:ribosome"/>
    <property type="evidence" value="ECO:0007669"/>
    <property type="project" value="UniProtKB-KW"/>
</dbReference>
<dbReference type="GO" id="GO:0019843">
    <property type="term" value="F:rRNA binding"/>
    <property type="evidence" value="ECO:0007669"/>
    <property type="project" value="UniProtKB-UniRule"/>
</dbReference>
<dbReference type="GO" id="GO:0003735">
    <property type="term" value="F:structural constituent of ribosome"/>
    <property type="evidence" value="ECO:0007669"/>
    <property type="project" value="InterPro"/>
</dbReference>
<dbReference type="GO" id="GO:0006412">
    <property type="term" value="P:translation"/>
    <property type="evidence" value="ECO:0007669"/>
    <property type="project" value="UniProtKB-UniRule"/>
</dbReference>
<dbReference type="FunFam" id="3.30.70.330:FF:000001">
    <property type="entry name" value="50S ribosomal protein L23"/>
    <property type="match status" value="1"/>
</dbReference>
<dbReference type="Gene3D" id="3.30.70.330">
    <property type="match status" value="1"/>
</dbReference>
<dbReference type="HAMAP" id="MF_01369_B">
    <property type="entry name" value="Ribosomal_uL23_B"/>
    <property type="match status" value="1"/>
</dbReference>
<dbReference type="InterPro" id="IPR012677">
    <property type="entry name" value="Nucleotide-bd_a/b_plait_sf"/>
</dbReference>
<dbReference type="InterPro" id="IPR013025">
    <property type="entry name" value="Ribosomal_uL23-like"/>
</dbReference>
<dbReference type="InterPro" id="IPR012678">
    <property type="entry name" value="Ribosomal_uL23/eL15/eS24_sf"/>
</dbReference>
<dbReference type="NCBIfam" id="NF004363">
    <property type="entry name" value="PRK05738.2-4"/>
    <property type="match status" value="1"/>
</dbReference>
<dbReference type="PANTHER" id="PTHR11620">
    <property type="entry name" value="60S RIBOSOMAL PROTEIN L23A"/>
    <property type="match status" value="1"/>
</dbReference>
<dbReference type="Pfam" id="PF00276">
    <property type="entry name" value="Ribosomal_L23"/>
    <property type="match status" value="1"/>
</dbReference>
<dbReference type="SUPFAM" id="SSF54189">
    <property type="entry name" value="Ribosomal proteins S24e, L23 and L15e"/>
    <property type="match status" value="1"/>
</dbReference>
<gene>
    <name evidence="1" type="primary">rplW</name>
    <name type="ordered locus">SSP0665</name>
</gene>
<name>RL23_STAS1</name>
<protein>
    <recommendedName>
        <fullName evidence="1">Large ribosomal subunit protein uL23</fullName>
    </recommendedName>
    <alternativeName>
        <fullName evidence="2">50S ribosomal protein L23</fullName>
    </alternativeName>
</protein>
<evidence type="ECO:0000255" key="1">
    <source>
        <dbReference type="HAMAP-Rule" id="MF_01369"/>
    </source>
</evidence>
<evidence type="ECO:0000305" key="2"/>
<sequence length="91" mass="10511">MEARDVLKRPVITEKSSAAMAEDKYTFDVDTRANKTQVKIAVEEIFDVKVDNVNIINYKPKKKRMGRYQGYTNKKRVAIVKLKEGSIDLFN</sequence>
<keyword id="KW-1185">Reference proteome</keyword>
<keyword id="KW-0687">Ribonucleoprotein</keyword>
<keyword id="KW-0689">Ribosomal protein</keyword>
<keyword id="KW-0694">RNA-binding</keyword>
<keyword id="KW-0699">rRNA-binding</keyword>
<accession>Q49ZG6</accession>
<reference key="1">
    <citation type="journal article" date="2005" name="Proc. Natl. Acad. Sci. U.S.A.">
        <title>Whole genome sequence of Staphylococcus saprophyticus reveals the pathogenesis of uncomplicated urinary tract infection.</title>
        <authorList>
            <person name="Kuroda M."/>
            <person name="Yamashita A."/>
            <person name="Hirakawa H."/>
            <person name="Kumano M."/>
            <person name="Morikawa K."/>
            <person name="Higashide M."/>
            <person name="Maruyama A."/>
            <person name="Inose Y."/>
            <person name="Matoba K."/>
            <person name="Toh H."/>
            <person name="Kuhara S."/>
            <person name="Hattori M."/>
            <person name="Ohta T."/>
        </authorList>
    </citation>
    <scope>NUCLEOTIDE SEQUENCE [LARGE SCALE GENOMIC DNA]</scope>
    <source>
        <strain>ATCC 15305 / DSM 20229 / NCIMB 8711 / NCTC 7292 / S-41</strain>
    </source>
</reference>
<comment type="function">
    <text evidence="1">One of the early assembly proteins it binds 23S rRNA. One of the proteins that surrounds the polypeptide exit tunnel on the outside of the ribosome. Forms the main docking site for trigger factor binding to the ribosome.</text>
</comment>
<comment type="subunit">
    <text evidence="1">Part of the 50S ribosomal subunit. Contacts protein L29, and trigger factor when it is bound to the ribosome.</text>
</comment>
<comment type="similarity">
    <text evidence="1">Belongs to the universal ribosomal protein uL23 family.</text>
</comment>
<organism>
    <name type="scientific">Staphylococcus saprophyticus subsp. saprophyticus (strain ATCC 15305 / DSM 20229 / NCIMB 8711 / NCTC 7292 / S-41)</name>
    <dbReference type="NCBI Taxonomy" id="342451"/>
    <lineage>
        <taxon>Bacteria</taxon>
        <taxon>Bacillati</taxon>
        <taxon>Bacillota</taxon>
        <taxon>Bacilli</taxon>
        <taxon>Bacillales</taxon>
        <taxon>Staphylococcaceae</taxon>
        <taxon>Staphylococcus</taxon>
    </lineage>
</organism>